<gene>
    <name evidence="1" type="primary">pheT</name>
    <name type="ordered locus">Lxx05990</name>
</gene>
<dbReference type="EC" id="6.1.1.20" evidence="1"/>
<dbReference type="EMBL" id="AE016822">
    <property type="protein sequence ID" value="AAT88559.1"/>
    <property type="molecule type" value="Genomic_DNA"/>
</dbReference>
<dbReference type="RefSeq" id="WP_011185558.1">
    <property type="nucleotide sequence ID" value="NC_006087.1"/>
</dbReference>
<dbReference type="SMR" id="Q6AGD6"/>
<dbReference type="STRING" id="281090.Lxx05990"/>
<dbReference type="KEGG" id="lxx:Lxx05990"/>
<dbReference type="eggNOG" id="COG0072">
    <property type="taxonomic scope" value="Bacteria"/>
</dbReference>
<dbReference type="eggNOG" id="COG0073">
    <property type="taxonomic scope" value="Bacteria"/>
</dbReference>
<dbReference type="HOGENOM" id="CLU_016891_0_0_11"/>
<dbReference type="Proteomes" id="UP000001306">
    <property type="component" value="Chromosome"/>
</dbReference>
<dbReference type="GO" id="GO:0009328">
    <property type="term" value="C:phenylalanine-tRNA ligase complex"/>
    <property type="evidence" value="ECO:0007669"/>
    <property type="project" value="TreeGrafter"/>
</dbReference>
<dbReference type="GO" id="GO:0005524">
    <property type="term" value="F:ATP binding"/>
    <property type="evidence" value="ECO:0007669"/>
    <property type="project" value="UniProtKB-UniRule"/>
</dbReference>
<dbReference type="GO" id="GO:0000287">
    <property type="term" value="F:magnesium ion binding"/>
    <property type="evidence" value="ECO:0007669"/>
    <property type="project" value="UniProtKB-UniRule"/>
</dbReference>
<dbReference type="GO" id="GO:0004826">
    <property type="term" value="F:phenylalanine-tRNA ligase activity"/>
    <property type="evidence" value="ECO:0007669"/>
    <property type="project" value="UniProtKB-UniRule"/>
</dbReference>
<dbReference type="GO" id="GO:0000049">
    <property type="term" value="F:tRNA binding"/>
    <property type="evidence" value="ECO:0007669"/>
    <property type="project" value="UniProtKB-KW"/>
</dbReference>
<dbReference type="GO" id="GO:0006432">
    <property type="term" value="P:phenylalanyl-tRNA aminoacylation"/>
    <property type="evidence" value="ECO:0007669"/>
    <property type="project" value="UniProtKB-UniRule"/>
</dbReference>
<dbReference type="CDD" id="cd00769">
    <property type="entry name" value="PheRS_beta_core"/>
    <property type="match status" value="1"/>
</dbReference>
<dbReference type="CDD" id="cd02796">
    <property type="entry name" value="tRNA_bind_bactPheRS"/>
    <property type="match status" value="1"/>
</dbReference>
<dbReference type="FunFam" id="3.50.40.10:FF:000001">
    <property type="entry name" value="Phenylalanine--tRNA ligase beta subunit"/>
    <property type="match status" value="1"/>
</dbReference>
<dbReference type="Gene3D" id="3.30.56.10">
    <property type="match status" value="2"/>
</dbReference>
<dbReference type="Gene3D" id="3.30.930.10">
    <property type="entry name" value="Bira Bifunctional Protein, Domain 2"/>
    <property type="match status" value="1"/>
</dbReference>
<dbReference type="Gene3D" id="3.30.70.380">
    <property type="entry name" value="Ferrodoxin-fold anticodon-binding domain"/>
    <property type="match status" value="1"/>
</dbReference>
<dbReference type="Gene3D" id="2.40.50.140">
    <property type="entry name" value="Nucleic acid-binding proteins"/>
    <property type="match status" value="1"/>
</dbReference>
<dbReference type="Gene3D" id="3.50.40.10">
    <property type="entry name" value="Phenylalanyl-trna Synthetase, Chain B, domain 3"/>
    <property type="match status" value="1"/>
</dbReference>
<dbReference type="HAMAP" id="MF_00283">
    <property type="entry name" value="Phe_tRNA_synth_beta1"/>
    <property type="match status" value="1"/>
</dbReference>
<dbReference type="InterPro" id="IPR045864">
    <property type="entry name" value="aa-tRNA-synth_II/BPL/LPL"/>
</dbReference>
<dbReference type="InterPro" id="IPR005146">
    <property type="entry name" value="B3/B4_tRNA-bd"/>
</dbReference>
<dbReference type="InterPro" id="IPR009061">
    <property type="entry name" value="DNA-bd_dom_put_sf"/>
</dbReference>
<dbReference type="InterPro" id="IPR005121">
    <property type="entry name" value="Fdx_antiC-bd"/>
</dbReference>
<dbReference type="InterPro" id="IPR036690">
    <property type="entry name" value="Fdx_antiC-bd_sf"/>
</dbReference>
<dbReference type="InterPro" id="IPR012340">
    <property type="entry name" value="NA-bd_OB-fold"/>
</dbReference>
<dbReference type="InterPro" id="IPR045060">
    <property type="entry name" value="Phe-tRNA-ligase_IIc_bsu"/>
</dbReference>
<dbReference type="InterPro" id="IPR004532">
    <property type="entry name" value="Phe-tRNA-ligase_IIc_bsu_bact"/>
</dbReference>
<dbReference type="InterPro" id="IPR020825">
    <property type="entry name" value="Phe-tRNA_synthase-like_B3/B4"/>
</dbReference>
<dbReference type="InterPro" id="IPR041616">
    <property type="entry name" value="PheRS_beta_core"/>
</dbReference>
<dbReference type="InterPro" id="IPR002547">
    <property type="entry name" value="tRNA-bd_dom"/>
</dbReference>
<dbReference type="InterPro" id="IPR033714">
    <property type="entry name" value="tRNA_bind_bactPheRS"/>
</dbReference>
<dbReference type="InterPro" id="IPR005147">
    <property type="entry name" value="tRNA_synthase_B5-dom"/>
</dbReference>
<dbReference type="NCBIfam" id="TIGR00472">
    <property type="entry name" value="pheT_bact"/>
    <property type="match status" value="1"/>
</dbReference>
<dbReference type="PANTHER" id="PTHR10947:SF0">
    <property type="entry name" value="PHENYLALANINE--TRNA LIGASE BETA SUBUNIT"/>
    <property type="match status" value="1"/>
</dbReference>
<dbReference type="PANTHER" id="PTHR10947">
    <property type="entry name" value="PHENYLALANYL-TRNA SYNTHETASE BETA CHAIN AND LEUCINE-RICH REPEAT-CONTAINING PROTEIN 47"/>
    <property type="match status" value="1"/>
</dbReference>
<dbReference type="Pfam" id="PF03483">
    <property type="entry name" value="B3_4"/>
    <property type="match status" value="1"/>
</dbReference>
<dbReference type="Pfam" id="PF03484">
    <property type="entry name" value="B5"/>
    <property type="match status" value="1"/>
</dbReference>
<dbReference type="Pfam" id="PF03147">
    <property type="entry name" value="FDX-ACB"/>
    <property type="match status" value="1"/>
</dbReference>
<dbReference type="Pfam" id="PF17759">
    <property type="entry name" value="tRNA_synthFbeta"/>
    <property type="match status" value="1"/>
</dbReference>
<dbReference type="SMART" id="SM00873">
    <property type="entry name" value="B3_4"/>
    <property type="match status" value="1"/>
</dbReference>
<dbReference type="SMART" id="SM00874">
    <property type="entry name" value="B5"/>
    <property type="match status" value="1"/>
</dbReference>
<dbReference type="SMART" id="SM00896">
    <property type="entry name" value="FDX-ACB"/>
    <property type="match status" value="1"/>
</dbReference>
<dbReference type="SUPFAM" id="SSF54991">
    <property type="entry name" value="Anticodon-binding domain of PheRS"/>
    <property type="match status" value="1"/>
</dbReference>
<dbReference type="SUPFAM" id="SSF55681">
    <property type="entry name" value="Class II aaRS and biotin synthetases"/>
    <property type="match status" value="1"/>
</dbReference>
<dbReference type="SUPFAM" id="SSF50249">
    <property type="entry name" value="Nucleic acid-binding proteins"/>
    <property type="match status" value="1"/>
</dbReference>
<dbReference type="SUPFAM" id="SSF56037">
    <property type="entry name" value="PheT/TilS domain"/>
    <property type="match status" value="1"/>
</dbReference>
<dbReference type="SUPFAM" id="SSF46955">
    <property type="entry name" value="Putative DNA-binding domain"/>
    <property type="match status" value="1"/>
</dbReference>
<dbReference type="PROSITE" id="PS51483">
    <property type="entry name" value="B5"/>
    <property type="match status" value="1"/>
</dbReference>
<dbReference type="PROSITE" id="PS51447">
    <property type="entry name" value="FDX_ACB"/>
    <property type="match status" value="1"/>
</dbReference>
<dbReference type="PROSITE" id="PS50886">
    <property type="entry name" value="TRBD"/>
    <property type="match status" value="1"/>
</dbReference>
<accession>Q6AGD6</accession>
<sequence>MRVPLSWLGEYVDLEPGTTPAEVHAALVSVGLEEEGVHTFGIEGPVVVGEVIDFVEEPQSNGKTIRWCQVRVAAEGQKAADGGADVRGIVCGAGNFFPGDKVVVTLPGAALPGPAPLTPFVIAARKTYGHVSDGMIASARELGLGDDHDGILRLSTLGLDPEVGADAVSLLGLDDTAVEVNVTPDRGYAFSIRGIAREYAHATGAAFRDPAEAVASPPPHAHGFSVAVEDRAPIRDRVGASVFVTRVVRDVDATRPTPPWMVARLKLAGIRSISLVVDITNYVMLELGQPTHGYDLDRLSGGIVVRRAHAGETLVTLDDQTRALHAEDLLITDDSGAIGLAGVMGGASTEIGAGTRNVLVEAANFDPVSIARTARRHKLPSEASKRFERGVDPRVAVAAAARVVQLLEQLAGGTADGLGSLLDETADAEPIRLPDDYIPNLIGVAFTDDEVRGALAEIGGSVSDTEGALLVVPPTWRPDLRDKSDLAEEVARIVGFDRIPSVLPVAPPGRGLSRAQTLRRAVAQTLADNGATEVLAFPFVGAAQNDLFGSPEPGGVPAVKLANPLDATAAYLRTSLLPGLLGIAKRNLARGLVDLSVYETGTVFLPGAALGSETLPPGAALPSRETLAGLNAGIPDQPRHLAGVVLGHTVRKQPGQPAVAAGLADALAMVDQAAAAVGVAVEPVQSRHQALHPGRTAQLVAGDGVRTVLGYAGELSPALAAELDLPRVVAVFELDLDALIAVAPAEIVAGTIAGFPAATQDLSLVVGDEVPAGEVLRAVREGAGALLEDIRLVDDYRGTGLPDSSKSLTFALRFRADDRTLTAAEASEAKQAGAARAGQLFGAAIRE</sequence>
<name>SYFB_LEIXX</name>
<proteinExistence type="inferred from homology"/>
<protein>
    <recommendedName>
        <fullName evidence="1">Phenylalanine--tRNA ligase beta subunit</fullName>
        <ecNumber evidence="1">6.1.1.20</ecNumber>
    </recommendedName>
    <alternativeName>
        <fullName evidence="1">Phenylalanyl-tRNA synthetase beta subunit</fullName>
        <shortName evidence="1">PheRS</shortName>
    </alternativeName>
</protein>
<evidence type="ECO:0000255" key="1">
    <source>
        <dbReference type="HAMAP-Rule" id="MF_00283"/>
    </source>
</evidence>
<feature type="chain" id="PRO_0000126903" description="Phenylalanine--tRNA ligase beta subunit">
    <location>
        <begin position="1"/>
        <end position="847"/>
    </location>
</feature>
<feature type="domain" description="tRNA-binding" evidence="1">
    <location>
        <begin position="40"/>
        <end position="168"/>
    </location>
</feature>
<feature type="domain" description="B5" evidence="1">
    <location>
        <begin position="426"/>
        <end position="501"/>
    </location>
</feature>
<feature type="domain" description="FDX-ACB" evidence="1">
    <location>
        <begin position="753"/>
        <end position="846"/>
    </location>
</feature>
<feature type="binding site" evidence="1">
    <location>
        <position position="479"/>
    </location>
    <ligand>
        <name>Mg(2+)</name>
        <dbReference type="ChEBI" id="CHEBI:18420"/>
        <note>shared with alpha subunit</note>
    </ligand>
</feature>
<feature type="binding site" evidence="1">
    <location>
        <position position="485"/>
    </location>
    <ligand>
        <name>Mg(2+)</name>
        <dbReference type="ChEBI" id="CHEBI:18420"/>
        <note>shared with alpha subunit</note>
    </ligand>
</feature>
<feature type="binding site" evidence="1">
    <location>
        <position position="488"/>
    </location>
    <ligand>
        <name>Mg(2+)</name>
        <dbReference type="ChEBI" id="CHEBI:18420"/>
        <note>shared with alpha subunit</note>
    </ligand>
</feature>
<feature type="binding site" evidence="1">
    <location>
        <position position="489"/>
    </location>
    <ligand>
        <name>Mg(2+)</name>
        <dbReference type="ChEBI" id="CHEBI:18420"/>
        <note>shared with alpha subunit</note>
    </ligand>
</feature>
<reference key="1">
    <citation type="journal article" date="2004" name="Mol. Plant Microbe Interact.">
        <title>The genome sequence of the Gram-positive sugarcane pathogen Leifsonia xyli subsp. xyli.</title>
        <authorList>
            <person name="Monteiro-Vitorello C.B."/>
            <person name="Camargo L.E.A."/>
            <person name="Van Sluys M.A."/>
            <person name="Kitajima J.P."/>
            <person name="Truffi D."/>
            <person name="do Amaral A.M."/>
            <person name="Harakava R."/>
            <person name="de Oliveira J.C.F."/>
            <person name="Wood D."/>
            <person name="de Oliveira M.C."/>
            <person name="Miyaki C.Y."/>
            <person name="Takita M.A."/>
            <person name="da Silva A.C.R."/>
            <person name="Furlan L.R."/>
            <person name="Carraro D.M."/>
            <person name="Camarotte G."/>
            <person name="Almeida N.F. Jr."/>
            <person name="Carrer H."/>
            <person name="Coutinho L.L."/>
            <person name="El-Dorry H.A."/>
            <person name="Ferro M.I.T."/>
            <person name="Gagliardi P.R."/>
            <person name="Giglioti E."/>
            <person name="Goldman M.H.S."/>
            <person name="Goldman G.H."/>
            <person name="Kimura E.T."/>
            <person name="Ferro E.S."/>
            <person name="Kuramae E.E."/>
            <person name="Lemos E.G.M."/>
            <person name="Lemos M.V.F."/>
            <person name="Mauro S.M.Z."/>
            <person name="Machado M.A."/>
            <person name="Marino C.L."/>
            <person name="Menck C.F."/>
            <person name="Nunes L.R."/>
            <person name="Oliveira R.C."/>
            <person name="Pereira G.G."/>
            <person name="Siqueira W."/>
            <person name="de Souza A.A."/>
            <person name="Tsai S.M."/>
            <person name="Zanca A.S."/>
            <person name="Simpson A.J.G."/>
            <person name="Brumbley S.M."/>
            <person name="Setubal J.C."/>
        </authorList>
    </citation>
    <scope>NUCLEOTIDE SEQUENCE [LARGE SCALE GENOMIC DNA]</scope>
    <source>
        <strain>CTCB07</strain>
    </source>
</reference>
<organism>
    <name type="scientific">Leifsonia xyli subsp. xyli (strain CTCB07)</name>
    <dbReference type="NCBI Taxonomy" id="281090"/>
    <lineage>
        <taxon>Bacteria</taxon>
        <taxon>Bacillati</taxon>
        <taxon>Actinomycetota</taxon>
        <taxon>Actinomycetes</taxon>
        <taxon>Micrococcales</taxon>
        <taxon>Microbacteriaceae</taxon>
        <taxon>Leifsonia</taxon>
    </lineage>
</organism>
<keyword id="KW-0030">Aminoacyl-tRNA synthetase</keyword>
<keyword id="KW-0067">ATP-binding</keyword>
<keyword id="KW-0963">Cytoplasm</keyword>
<keyword id="KW-0436">Ligase</keyword>
<keyword id="KW-0460">Magnesium</keyword>
<keyword id="KW-0479">Metal-binding</keyword>
<keyword id="KW-0547">Nucleotide-binding</keyword>
<keyword id="KW-0648">Protein biosynthesis</keyword>
<keyword id="KW-1185">Reference proteome</keyword>
<keyword id="KW-0694">RNA-binding</keyword>
<keyword id="KW-0820">tRNA-binding</keyword>
<comment type="catalytic activity">
    <reaction evidence="1">
        <text>tRNA(Phe) + L-phenylalanine + ATP = L-phenylalanyl-tRNA(Phe) + AMP + diphosphate + H(+)</text>
        <dbReference type="Rhea" id="RHEA:19413"/>
        <dbReference type="Rhea" id="RHEA-COMP:9668"/>
        <dbReference type="Rhea" id="RHEA-COMP:9699"/>
        <dbReference type="ChEBI" id="CHEBI:15378"/>
        <dbReference type="ChEBI" id="CHEBI:30616"/>
        <dbReference type="ChEBI" id="CHEBI:33019"/>
        <dbReference type="ChEBI" id="CHEBI:58095"/>
        <dbReference type="ChEBI" id="CHEBI:78442"/>
        <dbReference type="ChEBI" id="CHEBI:78531"/>
        <dbReference type="ChEBI" id="CHEBI:456215"/>
        <dbReference type="EC" id="6.1.1.20"/>
    </reaction>
</comment>
<comment type="cofactor">
    <cofactor evidence="1">
        <name>Mg(2+)</name>
        <dbReference type="ChEBI" id="CHEBI:18420"/>
    </cofactor>
    <text evidence="1">Binds 2 magnesium ions per tetramer.</text>
</comment>
<comment type="subunit">
    <text evidence="1">Tetramer of two alpha and two beta subunits.</text>
</comment>
<comment type="subcellular location">
    <subcellularLocation>
        <location evidence="1">Cytoplasm</location>
    </subcellularLocation>
</comment>
<comment type="similarity">
    <text evidence="1">Belongs to the phenylalanyl-tRNA synthetase beta subunit family. Type 1 subfamily.</text>
</comment>